<comment type="catalytic activity">
    <reaction evidence="1">
        <text>tRNA(His) + L-histidine + ATP = L-histidyl-tRNA(His) + AMP + diphosphate + H(+)</text>
        <dbReference type="Rhea" id="RHEA:17313"/>
        <dbReference type="Rhea" id="RHEA-COMP:9665"/>
        <dbReference type="Rhea" id="RHEA-COMP:9689"/>
        <dbReference type="ChEBI" id="CHEBI:15378"/>
        <dbReference type="ChEBI" id="CHEBI:30616"/>
        <dbReference type="ChEBI" id="CHEBI:33019"/>
        <dbReference type="ChEBI" id="CHEBI:57595"/>
        <dbReference type="ChEBI" id="CHEBI:78442"/>
        <dbReference type="ChEBI" id="CHEBI:78527"/>
        <dbReference type="ChEBI" id="CHEBI:456215"/>
        <dbReference type="EC" id="6.1.1.21"/>
    </reaction>
</comment>
<comment type="subunit">
    <text evidence="1">Homodimer.</text>
</comment>
<comment type="subcellular location">
    <subcellularLocation>
        <location evidence="1">Cytoplasm</location>
    </subcellularLocation>
</comment>
<comment type="similarity">
    <text evidence="1">Belongs to the class-II aminoacyl-tRNA synthetase family.</text>
</comment>
<sequence>MSIQIPRGTQDILPGSVELWQYIEGQAREICRRYNYKEIRTPIFEHTELFLRGVGDTTDIVQKEMYTFQDRGDRSLTLRPEGTAPVVRSYVENKMFGDATQPTKLYYIGQMFRYERPQAGRYRQFVQFGIEAIGSNDPAIDAEVIALAVEFYRGMGLKNIKVVLNSLGDPASRQAHREALIAHFKPRIGEFCSDCQSRLEKNPLRILDCKRDRDHELMNTAPSITDYLNEESTAYYEKVQELLTMMGVPFEKDPNLVRGLDYYQHTVFEIMSEAEGFGAITTLSGGGRYNGLVQEIGGPEMPGIGFAMSIERLIMALKAENIELPIENTIDCYVVALGDKAKDHAAKVAFDLRKSGLSVEKDYLNRKMKAQFKSADRLNAKYVAVLGEDELDKGVINLKDMATGEQEEVALDVFASYIAEKLI</sequence>
<evidence type="ECO:0000255" key="1">
    <source>
        <dbReference type="HAMAP-Rule" id="MF_00127"/>
    </source>
</evidence>
<name>SYH_BACCN</name>
<keyword id="KW-0030">Aminoacyl-tRNA synthetase</keyword>
<keyword id="KW-0067">ATP-binding</keyword>
<keyword id="KW-0963">Cytoplasm</keyword>
<keyword id="KW-0436">Ligase</keyword>
<keyword id="KW-0547">Nucleotide-binding</keyword>
<keyword id="KW-0648">Protein biosynthesis</keyword>
<proteinExistence type="inferred from homology"/>
<gene>
    <name evidence="1" type="primary">hisS</name>
    <name type="ordered locus">Bcer98_3119</name>
</gene>
<accession>A7GT85</accession>
<dbReference type="EC" id="6.1.1.21" evidence="1"/>
<dbReference type="EMBL" id="CP000764">
    <property type="protein sequence ID" value="ABS23343.1"/>
    <property type="molecule type" value="Genomic_DNA"/>
</dbReference>
<dbReference type="RefSeq" id="WP_012095580.1">
    <property type="nucleotide sequence ID" value="NC_009674.1"/>
</dbReference>
<dbReference type="SMR" id="A7GT85"/>
<dbReference type="STRING" id="315749.Bcer98_3119"/>
<dbReference type="GeneID" id="33898367"/>
<dbReference type="KEGG" id="bcy:Bcer98_3119"/>
<dbReference type="eggNOG" id="COG0124">
    <property type="taxonomic scope" value="Bacteria"/>
</dbReference>
<dbReference type="HOGENOM" id="CLU_025113_1_1_9"/>
<dbReference type="OrthoDB" id="9800814at2"/>
<dbReference type="Proteomes" id="UP000002300">
    <property type="component" value="Chromosome"/>
</dbReference>
<dbReference type="GO" id="GO:0005737">
    <property type="term" value="C:cytoplasm"/>
    <property type="evidence" value="ECO:0007669"/>
    <property type="project" value="UniProtKB-SubCell"/>
</dbReference>
<dbReference type="GO" id="GO:0005524">
    <property type="term" value="F:ATP binding"/>
    <property type="evidence" value="ECO:0007669"/>
    <property type="project" value="UniProtKB-UniRule"/>
</dbReference>
<dbReference type="GO" id="GO:0140096">
    <property type="term" value="F:catalytic activity, acting on a protein"/>
    <property type="evidence" value="ECO:0007669"/>
    <property type="project" value="UniProtKB-ARBA"/>
</dbReference>
<dbReference type="GO" id="GO:0004821">
    <property type="term" value="F:histidine-tRNA ligase activity"/>
    <property type="evidence" value="ECO:0007669"/>
    <property type="project" value="UniProtKB-UniRule"/>
</dbReference>
<dbReference type="GO" id="GO:0016740">
    <property type="term" value="F:transferase activity"/>
    <property type="evidence" value="ECO:0007669"/>
    <property type="project" value="UniProtKB-ARBA"/>
</dbReference>
<dbReference type="GO" id="GO:0006427">
    <property type="term" value="P:histidyl-tRNA aminoacylation"/>
    <property type="evidence" value="ECO:0007669"/>
    <property type="project" value="UniProtKB-UniRule"/>
</dbReference>
<dbReference type="CDD" id="cd00773">
    <property type="entry name" value="HisRS-like_core"/>
    <property type="match status" value="1"/>
</dbReference>
<dbReference type="CDD" id="cd00859">
    <property type="entry name" value="HisRS_anticodon"/>
    <property type="match status" value="1"/>
</dbReference>
<dbReference type="FunFam" id="3.30.930.10:FF:000005">
    <property type="entry name" value="Histidine--tRNA ligase"/>
    <property type="match status" value="1"/>
</dbReference>
<dbReference type="FunFam" id="3.40.50.800:FF:000013">
    <property type="entry name" value="Histidine--tRNA ligase"/>
    <property type="match status" value="1"/>
</dbReference>
<dbReference type="Gene3D" id="3.40.50.800">
    <property type="entry name" value="Anticodon-binding domain"/>
    <property type="match status" value="1"/>
</dbReference>
<dbReference type="Gene3D" id="3.30.930.10">
    <property type="entry name" value="Bira Bifunctional Protein, Domain 2"/>
    <property type="match status" value="1"/>
</dbReference>
<dbReference type="HAMAP" id="MF_00127">
    <property type="entry name" value="His_tRNA_synth"/>
    <property type="match status" value="1"/>
</dbReference>
<dbReference type="InterPro" id="IPR006195">
    <property type="entry name" value="aa-tRNA-synth_II"/>
</dbReference>
<dbReference type="InterPro" id="IPR045864">
    <property type="entry name" value="aa-tRNA-synth_II/BPL/LPL"/>
</dbReference>
<dbReference type="InterPro" id="IPR004154">
    <property type="entry name" value="Anticodon-bd"/>
</dbReference>
<dbReference type="InterPro" id="IPR036621">
    <property type="entry name" value="Anticodon-bd_dom_sf"/>
</dbReference>
<dbReference type="InterPro" id="IPR015807">
    <property type="entry name" value="His-tRNA-ligase"/>
</dbReference>
<dbReference type="InterPro" id="IPR041715">
    <property type="entry name" value="HisRS-like_core"/>
</dbReference>
<dbReference type="InterPro" id="IPR004516">
    <property type="entry name" value="HisRS/HisZ"/>
</dbReference>
<dbReference type="InterPro" id="IPR033656">
    <property type="entry name" value="HisRS_anticodon"/>
</dbReference>
<dbReference type="NCBIfam" id="TIGR00442">
    <property type="entry name" value="hisS"/>
    <property type="match status" value="1"/>
</dbReference>
<dbReference type="PANTHER" id="PTHR43707:SF1">
    <property type="entry name" value="HISTIDINE--TRNA LIGASE, MITOCHONDRIAL-RELATED"/>
    <property type="match status" value="1"/>
</dbReference>
<dbReference type="PANTHER" id="PTHR43707">
    <property type="entry name" value="HISTIDYL-TRNA SYNTHETASE"/>
    <property type="match status" value="1"/>
</dbReference>
<dbReference type="Pfam" id="PF03129">
    <property type="entry name" value="HGTP_anticodon"/>
    <property type="match status" value="1"/>
</dbReference>
<dbReference type="Pfam" id="PF13393">
    <property type="entry name" value="tRNA-synt_His"/>
    <property type="match status" value="1"/>
</dbReference>
<dbReference type="PIRSF" id="PIRSF001549">
    <property type="entry name" value="His-tRNA_synth"/>
    <property type="match status" value="1"/>
</dbReference>
<dbReference type="SUPFAM" id="SSF52954">
    <property type="entry name" value="Class II aaRS ABD-related"/>
    <property type="match status" value="1"/>
</dbReference>
<dbReference type="SUPFAM" id="SSF55681">
    <property type="entry name" value="Class II aaRS and biotin synthetases"/>
    <property type="match status" value="1"/>
</dbReference>
<dbReference type="PROSITE" id="PS50862">
    <property type="entry name" value="AA_TRNA_LIGASE_II"/>
    <property type="match status" value="1"/>
</dbReference>
<organism>
    <name type="scientific">Bacillus cytotoxicus (strain DSM 22905 / CIP 110041 / 391-98 / NVH 391-98)</name>
    <dbReference type="NCBI Taxonomy" id="315749"/>
    <lineage>
        <taxon>Bacteria</taxon>
        <taxon>Bacillati</taxon>
        <taxon>Bacillota</taxon>
        <taxon>Bacilli</taxon>
        <taxon>Bacillales</taxon>
        <taxon>Bacillaceae</taxon>
        <taxon>Bacillus</taxon>
        <taxon>Bacillus cereus group</taxon>
    </lineage>
</organism>
<reference key="1">
    <citation type="journal article" date="2008" name="Chem. Biol. Interact.">
        <title>Extending the Bacillus cereus group genomics to putative food-borne pathogens of different toxicity.</title>
        <authorList>
            <person name="Lapidus A."/>
            <person name="Goltsman E."/>
            <person name="Auger S."/>
            <person name="Galleron N."/>
            <person name="Segurens B."/>
            <person name="Dossat C."/>
            <person name="Land M.L."/>
            <person name="Broussolle V."/>
            <person name="Brillard J."/>
            <person name="Guinebretiere M.-H."/>
            <person name="Sanchis V."/>
            <person name="Nguen-the C."/>
            <person name="Lereclus D."/>
            <person name="Richardson P."/>
            <person name="Wincker P."/>
            <person name="Weissenbach J."/>
            <person name="Ehrlich S.D."/>
            <person name="Sorokin A."/>
        </authorList>
    </citation>
    <scope>NUCLEOTIDE SEQUENCE [LARGE SCALE GENOMIC DNA]</scope>
    <source>
        <strain>DSM 22905 / CIP 110041 / 391-98 / NVH 391-98</strain>
    </source>
</reference>
<feature type="chain" id="PRO_1000076261" description="Histidine--tRNA ligase">
    <location>
        <begin position="1"/>
        <end position="423"/>
    </location>
</feature>
<protein>
    <recommendedName>
        <fullName evidence="1">Histidine--tRNA ligase</fullName>
        <ecNumber evidence="1">6.1.1.21</ecNumber>
    </recommendedName>
    <alternativeName>
        <fullName evidence="1">Histidyl-tRNA synthetase</fullName>
        <shortName evidence="1">HisRS</shortName>
    </alternativeName>
</protein>